<accession>P44927</accession>
<feature type="chain" id="PRO_0000173324" description="Multidrug export protein EmrB">
    <location>
        <begin position="1"/>
        <end position="510"/>
    </location>
</feature>
<feature type="topological domain" description="Cytoplasmic" evidence="2">
    <location>
        <begin position="1"/>
        <end position="7"/>
    </location>
</feature>
<feature type="transmembrane region" description="Helical" evidence="2">
    <location>
        <begin position="8"/>
        <end position="28"/>
    </location>
</feature>
<feature type="topological domain" description="Periplasmic" evidence="2">
    <location>
        <begin position="29"/>
        <end position="31"/>
    </location>
</feature>
<feature type="transmembrane region" description="Helical" evidence="2">
    <location>
        <begin position="32"/>
        <end position="52"/>
    </location>
</feature>
<feature type="topological domain" description="Cytoplasmic" evidence="2">
    <location>
        <begin position="53"/>
        <end position="56"/>
    </location>
</feature>
<feature type="transmembrane region" description="Helical" evidence="2">
    <location>
        <begin position="57"/>
        <end position="77"/>
    </location>
</feature>
<feature type="topological domain" description="Periplasmic" evidence="2">
    <location>
        <begin position="78"/>
        <end position="91"/>
    </location>
</feature>
<feature type="transmembrane region" description="Helical" evidence="2">
    <location>
        <begin position="92"/>
        <end position="112"/>
    </location>
</feature>
<feature type="topological domain" description="Cytoplasmic" evidence="2">
    <location>
        <position position="113"/>
    </location>
</feature>
<feature type="transmembrane region" description="Helical" evidence="2">
    <location>
        <begin position="114"/>
        <end position="134"/>
    </location>
</feature>
<feature type="topological domain" description="Periplasmic" evidence="2">
    <location>
        <begin position="135"/>
        <end position="144"/>
    </location>
</feature>
<feature type="transmembrane region" description="Helical" evidence="2">
    <location>
        <begin position="145"/>
        <end position="165"/>
    </location>
</feature>
<feature type="topological domain" description="Cytoplasmic" evidence="2">
    <location>
        <begin position="166"/>
        <end position="168"/>
    </location>
</feature>
<feature type="transmembrane region" description="Helical" evidence="2">
    <location>
        <begin position="169"/>
        <end position="189"/>
    </location>
</feature>
<feature type="topological domain" description="Periplasmic" evidence="2">
    <location>
        <begin position="190"/>
        <end position="203"/>
    </location>
</feature>
<feature type="transmembrane region" description="Helical" evidence="2">
    <location>
        <begin position="204"/>
        <end position="224"/>
    </location>
</feature>
<feature type="topological domain" description="Cytoplasmic" evidence="2">
    <location>
        <begin position="225"/>
        <end position="237"/>
    </location>
</feature>
<feature type="transmembrane region" description="Helical" evidence="2">
    <location>
        <begin position="238"/>
        <end position="258"/>
    </location>
</feature>
<feature type="topological domain" description="Periplasmic" evidence="2">
    <location>
        <begin position="259"/>
        <end position="278"/>
    </location>
</feature>
<feature type="transmembrane region" description="Helical" evidence="2">
    <location>
        <begin position="279"/>
        <end position="299"/>
    </location>
</feature>
<feature type="topological domain" description="Cytoplasmic" evidence="2">
    <location>
        <begin position="300"/>
        <end position="308"/>
    </location>
</feature>
<feature type="transmembrane region" description="Helical" evidence="2">
    <location>
        <begin position="309"/>
        <end position="329"/>
    </location>
</feature>
<feature type="topological domain" description="Periplasmic" evidence="2">
    <location>
        <begin position="330"/>
        <end position="338"/>
    </location>
</feature>
<feature type="transmembrane region" description="Helical" evidence="2">
    <location>
        <begin position="339"/>
        <end position="359"/>
    </location>
</feature>
<feature type="topological domain" description="Cytoplasmic" evidence="2">
    <location>
        <begin position="360"/>
        <end position="375"/>
    </location>
</feature>
<feature type="transmembrane region" description="Helical" evidence="2">
    <location>
        <begin position="376"/>
        <end position="396"/>
    </location>
</feature>
<feature type="topological domain" description="Periplasmic" evidence="2">
    <location>
        <begin position="397"/>
        <end position="483"/>
    </location>
</feature>
<feature type="transmembrane region" description="Helical" evidence="2">
    <location>
        <begin position="484"/>
        <end position="504"/>
    </location>
</feature>
<feature type="topological domain" description="Cytoplasmic" evidence="2">
    <location>
        <begin position="505"/>
        <end position="510"/>
    </location>
</feature>
<proteinExistence type="inferred from homology"/>
<name>EMRB_HAEIN</name>
<sequence>MGNSAKKFPPIQGGALILLTLALSLATFMQVLDSTIANVAIPTIAGDLGASFSQGTWVITSFGVANAISIPITGWLAKRFGEVRLFLVSTFLFVVSSWLCGIADSLEALIIFRVIQGAVAGPVIPLSQSLLLNNYPPEKRGMALAFWSMTIVVAPIFGPILGGWISDNIHWGWIFFINVPIGLSVVLISWKILGSRESEIVHQPIDKVGLVLLVLGVGCLQLMLDQGREQDWFNSNEIIILAVVAVVCLIALVIWELTDDNPVVDISLFHSRNFSVGCLCTSLAFLIYLGSVVLIPLLLQQVFHYTATWAGLAASPVGLFPILLSPIIGRFGYKIDMRILVTISFIVYAITFYWRAVTFEPSMTFVDVALPQLVQGLAVSCFFMPLTTITLSGLPAHKMASASSLFNFLRTLAGSVGTSLTTFMWYNREAVHHTQLTEHINPYNPISQSFYHQMNQFGLSDTQTSAYLAQQITSQGFIIGANEIFWLSAMGFLGLLIVIWFAKPPFGTQH</sequence>
<keyword id="KW-0046">Antibiotic resistance</keyword>
<keyword id="KW-0997">Cell inner membrane</keyword>
<keyword id="KW-1003">Cell membrane</keyword>
<keyword id="KW-0472">Membrane</keyword>
<keyword id="KW-1185">Reference proteome</keyword>
<keyword id="KW-0812">Transmembrane</keyword>
<keyword id="KW-1133">Transmembrane helix</keyword>
<keyword id="KW-0813">Transport</keyword>
<evidence type="ECO:0000250" key="1"/>
<evidence type="ECO:0000255" key="2"/>
<evidence type="ECO:0000305" key="3"/>
<comment type="function">
    <text evidence="1">Confers resistance to antibiotics.</text>
</comment>
<comment type="subcellular location">
    <subcellularLocation>
        <location evidence="1">Cell inner membrane</location>
        <topology evidence="1">Multi-pass membrane protein</topology>
    </subcellularLocation>
</comment>
<comment type="similarity">
    <text evidence="3">Belongs to the major facilitator superfamily. EmrB family.</text>
</comment>
<reference key="1">
    <citation type="journal article" date="1995" name="Science">
        <title>Whole-genome random sequencing and assembly of Haemophilus influenzae Rd.</title>
        <authorList>
            <person name="Fleischmann R.D."/>
            <person name="Adams M.D."/>
            <person name="White O."/>
            <person name="Clayton R.A."/>
            <person name="Kirkness E.F."/>
            <person name="Kerlavage A.R."/>
            <person name="Bult C.J."/>
            <person name="Tomb J.-F."/>
            <person name="Dougherty B.A."/>
            <person name="Merrick J.M."/>
            <person name="McKenney K."/>
            <person name="Sutton G.G."/>
            <person name="FitzHugh W."/>
            <person name="Fields C.A."/>
            <person name="Gocayne J.D."/>
            <person name="Scott J.D."/>
            <person name="Shirley R."/>
            <person name="Liu L.-I."/>
            <person name="Glodek A."/>
            <person name="Kelley J.M."/>
            <person name="Weidman J.F."/>
            <person name="Phillips C.A."/>
            <person name="Spriggs T."/>
            <person name="Hedblom E."/>
            <person name="Cotton M.D."/>
            <person name="Utterback T.R."/>
            <person name="Hanna M.C."/>
            <person name="Nguyen D.T."/>
            <person name="Saudek D.M."/>
            <person name="Brandon R.C."/>
            <person name="Fine L.D."/>
            <person name="Fritchman J.L."/>
            <person name="Fuhrmann J.L."/>
            <person name="Geoghagen N.S.M."/>
            <person name="Gnehm C.L."/>
            <person name="McDonald L.A."/>
            <person name="Small K.V."/>
            <person name="Fraser C.M."/>
            <person name="Smith H.O."/>
            <person name="Venter J.C."/>
        </authorList>
    </citation>
    <scope>NUCLEOTIDE SEQUENCE [LARGE SCALE GENOMIC DNA]</scope>
    <source>
        <strain>ATCC 51907 / DSM 11121 / KW20 / Rd</strain>
    </source>
</reference>
<protein>
    <recommendedName>
        <fullName>Multidrug export protein EmrB</fullName>
    </recommendedName>
</protein>
<gene>
    <name type="primary">emrB</name>
    <name type="ordered locus">HI_0897</name>
</gene>
<dbReference type="EMBL" id="L42023">
    <property type="protein sequence ID" value="AAC22557.1"/>
    <property type="molecule type" value="Genomic_DNA"/>
</dbReference>
<dbReference type="PIR" id="A64101">
    <property type="entry name" value="A64101"/>
</dbReference>
<dbReference type="RefSeq" id="NP_439058.1">
    <property type="nucleotide sequence ID" value="NC_000907.1"/>
</dbReference>
<dbReference type="SMR" id="P44927"/>
<dbReference type="STRING" id="71421.HI_0897"/>
<dbReference type="EnsemblBacteria" id="AAC22557">
    <property type="protein sequence ID" value="AAC22557"/>
    <property type="gene ID" value="HI_0897"/>
</dbReference>
<dbReference type="KEGG" id="hin:HI_0897"/>
<dbReference type="PATRIC" id="fig|71421.8.peg.939"/>
<dbReference type="eggNOG" id="COG2814">
    <property type="taxonomic scope" value="Bacteria"/>
</dbReference>
<dbReference type="HOGENOM" id="CLU_000960_28_0_6"/>
<dbReference type="OrthoDB" id="9812221at2"/>
<dbReference type="PhylomeDB" id="P44927"/>
<dbReference type="BioCyc" id="HINF71421:G1GJ1-937-MONOMER"/>
<dbReference type="Proteomes" id="UP000000579">
    <property type="component" value="Chromosome"/>
</dbReference>
<dbReference type="GO" id="GO:0005886">
    <property type="term" value="C:plasma membrane"/>
    <property type="evidence" value="ECO:0000318"/>
    <property type="project" value="GO_Central"/>
</dbReference>
<dbReference type="GO" id="GO:0022857">
    <property type="term" value="F:transmembrane transporter activity"/>
    <property type="evidence" value="ECO:0000318"/>
    <property type="project" value="GO_Central"/>
</dbReference>
<dbReference type="GO" id="GO:0046677">
    <property type="term" value="P:response to antibiotic"/>
    <property type="evidence" value="ECO:0007669"/>
    <property type="project" value="UniProtKB-KW"/>
</dbReference>
<dbReference type="GO" id="GO:0055085">
    <property type="term" value="P:transmembrane transport"/>
    <property type="evidence" value="ECO:0000318"/>
    <property type="project" value="GO_Central"/>
</dbReference>
<dbReference type="CDD" id="cd17503">
    <property type="entry name" value="MFS_LmrB_MDR_like"/>
    <property type="match status" value="1"/>
</dbReference>
<dbReference type="FunFam" id="1.20.1720.10:FF:000002">
    <property type="entry name" value="Multidrug resistance protein B"/>
    <property type="match status" value="1"/>
</dbReference>
<dbReference type="Gene3D" id="1.20.1250.20">
    <property type="entry name" value="MFS general substrate transporter like domains"/>
    <property type="match status" value="1"/>
</dbReference>
<dbReference type="Gene3D" id="1.20.1720.10">
    <property type="entry name" value="Multidrug resistance protein D"/>
    <property type="match status" value="1"/>
</dbReference>
<dbReference type="InterPro" id="IPR004638">
    <property type="entry name" value="EmrB-like"/>
</dbReference>
<dbReference type="InterPro" id="IPR011701">
    <property type="entry name" value="MFS"/>
</dbReference>
<dbReference type="InterPro" id="IPR020846">
    <property type="entry name" value="MFS_dom"/>
</dbReference>
<dbReference type="InterPro" id="IPR036259">
    <property type="entry name" value="MFS_trans_sf"/>
</dbReference>
<dbReference type="NCBIfam" id="TIGR00711">
    <property type="entry name" value="efflux_EmrB"/>
    <property type="match status" value="1"/>
</dbReference>
<dbReference type="PANTHER" id="PTHR42718">
    <property type="entry name" value="MAJOR FACILITATOR SUPERFAMILY MULTIDRUG TRANSPORTER MFSC"/>
    <property type="match status" value="1"/>
</dbReference>
<dbReference type="PANTHER" id="PTHR42718:SF9">
    <property type="entry name" value="MAJOR FACILITATOR SUPERFAMILY MULTIDRUG TRANSPORTER MFSC"/>
    <property type="match status" value="1"/>
</dbReference>
<dbReference type="Pfam" id="PF07690">
    <property type="entry name" value="MFS_1"/>
    <property type="match status" value="1"/>
</dbReference>
<dbReference type="SUPFAM" id="SSF103473">
    <property type="entry name" value="MFS general substrate transporter"/>
    <property type="match status" value="1"/>
</dbReference>
<dbReference type="PROSITE" id="PS50850">
    <property type="entry name" value="MFS"/>
    <property type="match status" value="1"/>
</dbReference>
<organism>
    <name type="scientific">Haemophilus influenzae (strain ATCC 51907 / DSM 11121 / KW20 / Rd)</name>
    <dbReference type="NCBI Taxonomy" id="71421"/>
    <lineage>
        <taxon>Bacteria</taxon>
        <taxon>Pseudomonadati</taxon>
        <taxon>Pseudomonadota</taxon>
        <taxon>Gammaproteobacteria</taxon>
        <taxon>Pasteurellales</taxon>
        <taxon>Pasteurellaceae</taxon>
        <taxon>Haemophilus</taxon>
    </lineage>
</organism>